<keyword id="KW-0002">3D-structure</keyword>
<keyword id="KW-0025">Alternative splicing</keyword>
<keyword id="KW-0217">Developmental protein</keyword>
<keyword id="KW-0238">DNA-binding</keyword>
<keyword id="KW-0479">Metal-binding</keyword>
<keyword id="KW-0539">Nucleus</keyword>
<keyword id="KW-1267">Proteomics identification</keyword>
<keyword id="KW-1185">Reference proteome</keyword>
<keyword id="KW-0677">Repeat</keyword>
<keyword id="KW-0804">Transcription</keyword>
<keyword id="KW-0805">Transcription regulation</keyword>
<keyword id="KW-0862">Zinc</keyword>
<keyword id="KW-0863">Zinc-finger</keyword>
<protein>
    <recommendedName>
        <fullName>Zinc finger protein 568</fullName>
    </recommendedName>
</protein>
<accession>Q3ZCX4</accession>
<accession>B4DS92</accession>
<accession>E7ER33</accession>
<accession>Q6N060</accession>
<accession>Q8NA64</accession>
<organism>
    <name type="scientific">Homo sapiens</name>
    <name type="common">Human</name>
    <dbReference type="NCBI Taxonomy" id="9606"/>
    <lineage>
        <taxon>Eukaryota</taxon>
        <taxon>Metazoa</taxon>
        <taxon>Chordata</taxon>
        <taxon>Craniata</taxon>
        <taxon>Vertebrata</taxon>
        <taxon>Euteleostomi</taxon>
        <taxon>Mammalia</taxon>
        <taxon>Eutheria</taxon>
        <taxon>Euarchontoglires</taxon>
        <taxon>Primates</taxon>
        <taxon>Haplorrhini</taxon>
        <taxon>Catarrhini</taxon>
        <taxon>Hominidae</taxon>
        <taxon>Homo</taxon>
    </lineage>
</organism>
<evidence type="ECO:0000250" key="1">
    <source>
        <dbReference type="UniProtKB" id="E9PYI1"/>
    </source>
</evidence>
<evidence type="ECO:0000255" key="2">
    <source>
        <dbReference type="PROSITE-ProRule" id="PRU00042"/>
    </source>
</evidence>
<evidence type="ECO:0000255" key="3">
    <source>
        <dbReference type="PROSITE-ProRule" id="PRU00119"/>
    </source>
</evidence>
<evidence type="ECO:0000269" key="4">
    <source>
    </source>
</evidence>
<evidence type="ECO:0000303" key="5">
    <source>
    </source>
</evidence>
<evidence type="ECO:0000303" key="6">
    <source>
    </source>
</evidence>
<evidence type="ECO:0000305" key="7"/>
<evidence type="ECO:0007829" key="8">
    <source>
        <dbReference type="PDB" id="7W5Q"/>
    </source>
</evidence>
<feature type="chain" id="PRO_0000306877" description="Zinc finger protein 568">
    <location>
        <begin position="1"/>
        <end position="644"/>
    </location>
</feature>
<feature type="domain" description="KRAB" evidence="3">
    <location>
        <begin position="48"/>
        <end position="119"/>
    </location>
</feature>
<feature type="zinc finger region" description="C2H2-type 1" evidence="2">
    <location>
        <begin position="222"/>
        <end position="244"/>
    </location>
</feature>
<feature type="zinc finger region" description="C2H2-type 2" evidence="2">
    <location>
        <begin position="250"/>
        <end position="272"/>
    </location>
</feature>
<feature type="zinc finger region" description="C2H2-type 3" evidence="2">
    <location>
        <begin position="278"/>
        <end position="300"/>
    </location>
</feature>
<feature type="zinc finger region" description="C2H2-type 4" evidence="2">
    <location>
        <begin position="306"/>
        <end position="328"/>
    </location>
</feature>
<feature type="zinc finger region" description="C2H2-type 5" evidence="2">
    <location>
        <begin position="334"/>
        <end position="356"/>
    </location>
</feature>
<feature type="zinc finger region" description="C2H2-type 6" evidence="2">
    <location>
        <begin position="362"/>
        <end position="384"/>
    </location>
</feature>
<feature type="zinc finger region" description="C2H2-type 7" evidence="2">
    <location>
        <begin position="390"/>
        <end position="412"/>
    </location>
</feature>
<feature type="zinc finger region" description="C2H2-type 8" evidence="2">
    <location>
        <begin position="418"/>
        <end position="440"/>
    </location>
</feature>
<feature type="zinc finger region" description="C2H2-type 9" evidence="2">
    <location>
        <begin position="446"/>
        <end position="468"/>
    </location>
</feature>
<feature type="zinc finger region" description="C2H2-type 10" evidence="2">
    <location>
        <begin position="474"/>
        <end position="496"/>
    </location>
</feature>
<feature type="zinc finger region" description="C2H2-type 11" evidence="2">
    <location>
        <begin position="502"/>
        <end position="524"/>
    </location>
</feature>
<feature type="zinc finger region" description="C2H2-type 12" evidence="2">
    <location>
        <begin position="530"/>
        <end position="552"/>
    </location>
</feature>
<feature type="zinc finger region" description="C2H2-type 13" evidence="2">
    <location>
        <begin position="558"/>
        <end position="580"/>
    </location>
</feature>
<feature type="zinc finger region" description="C2H2-type 14" evidence="2">
    <location>
        <begin position="586"/>
        <end position="608"/>
    </location>
</feature>
<feature type="zinc finger region" description="C2H2-type 15" evidence="2">
    <location>
        <begin position="614"/>
        <end position="636"/>
    </location>
</feature>
<feature type="splice variant" id="VSP_028556" description="In isoform 2 and isoform 3." evidence="5 6">
    <location>
        <begin position="1"/>
        <end position="64"/>
    </location>
</feature>
<feature type="splice variant" id="VSP_046815" description="In isoform 3." evidence="5">
    <original>VWEVDEQIKKQQETLVRKVTSISKKILIKEKVIECKKVAKIFPLSSDIVTSRQSFYDCDSLDKGLEHNLDLLRYEKGCVREKQSNEFGKPFYHCASYVVTPFKCNQCGQDFSHKFDLIRHERIHAGEKPYECKECGKAFSRKENLITHQKIHTGEKPYKCNECGKAFIQMSNLIRHHRIHTGEKPYACKDCWKAFSQKSNLIEHERIHTGEKPYECKECGKSFSQKQNLIEHEKIHTGEKPYACNECGRAFSRMSSVTLHMRSHTGEKPYKCNKCGKAFSQCSVFIIHMRSHTGEKPYVCSECGKAFSQSSSLTVHMRNHTAEKPYECKECGKAFSRKENLITHQKIHTGEKPYECSECGKAFIQMSNLIRHQRIHTGEKPYACTVCGKAFSQKSNLTEHEKIHTGEKPYHCNQCGKAFSQRQNLLEHEKIHTGEKPFKCNECGKAFSRISSLTLHVRSHTGEKPYECNKCGKAFSQCSLLIIHMRSHTGEKPFECNECGKAFSQRASLSIHKRGHTGERHQVY</original>
    <variation>PRRGENCCASEVMAEGLKFKDVVIYFSQKEWECLHSAQKDLYRDVMLENYGNLVLLGLSDTKPNVISLLEQKKEPWMVKRKETKEWCPDWEFGRETKNLSPKENIYEIRSPQQEKARVIREIRCQVERQQGHQEGHFRPAVIPFTSMQCTAHREYQWLHTGEKSCECRKCKNAFRYQSCPIQHEIIHNKEKEPECGECRKIFNSGSDLIKHQTLHESKKHSENNKCAFNHDSGITQPQSINTGEKPHKCKECGKAFRSSSQISQHQRMHLGEKPYKCRECGKAFPSTAQLNLHQRIHTDEKYYESKACGKAFTRPSHLFRHQRIHTGEKPHKCKECGKAFRYDTQLSLHQIIHTGERRYECRECGKVYSCASQLSLHQRIHTGEKPHECKECGKAFISDSHLIRHQSVHTGEKPCKCKECGKSFRRGSELTRHQRAHTGEKPYECKECEKAFTCSTELVRHQKVHTGERPHKCKECGKAFIRRSELTHHERSHTGEKPYECKECGKPFGGGSELS</variation>
    <location>
        <begin position="121"/>
        <end position="644"/>
    </location>
</feature>
<feature type="sequence variant" id="VAR_052867" description="In dbSNP:rs547483.">
    <original>M</original>
    <variation>T</variation>
    <location>
        <position position="437"/>
    </location>
</feature>
<feature type="sequence variant" id="VAR_052868" description="In dbSNP:rs1644634.">
    <original>Q</original>
    <variation>R</variation>
    <location>
        <position position="642"/>
    </location>
</feature>
<feature type="sequence conflict" description="In Ref. 4; AAH31218." evidence="7" ref="4">
    <original>V</original>
    <variation>M</variation>
    <location>
        <position position="96"/>
    </location>
</feature>
<feature type="sequence conflict" description="In Ref. 2; CAE45810." evidence="7" ref="2">
    <original>I</original>
    <variation>V</variation>
    <location>
        <position position="128"/>
    </location>
</feature>
<feature type="strand" evidence="8">
    <location>
        <begin position="8"/>
        <end position="11"/>
    </location>
</feature>
<feature type="helix" evidence="8">
    <location>
        <begin position="14"/>
        <end position="16"/>
    </location>
</feature>
<feature type="helix" evidence="8">
    <location>
        <begin position="18"/>
        <end position="20"/>
    </location>
</feature>
<feature type="turn" evidence="8">
    <location>
        <begin position="32"/>
        <end position="35"/>
    </location>
</feature>
<feature type="strand" evidence="8">
    <location>
        <begin position="62"/>
        <end position="64"/>
    </location>
</feature>
<feature type="turn" evidence="8">
    <location>
        <begin position="67"/>
        <end position="69"/>
    </location>
</feature>
<feature type="strand" evidence="8">
    <location>
        <begin position="70"/>
        <end position="73"/>
    </location>
</feature>
<feature type="turn" evidence="8">
    <location>
        <begin position="74"/>
        <end position="79"/>
    </location>
</feature>
<feature type="turn" evidence="8">
    <location>
        <begin position="82"/>
        <end position="84"/>
    </location>
</feature>
<feature type="strand" evidence="8">
    <location>
        <begin position="85"/>
        <end position="87"/>
    </location>
</feature>
<feature type="strand" evidence="8">
    <location>
        <begin position="97"/>
        <end position="104"/>
    </location>
</feature>
<feature type="strand" evidence="8">
    <location>
        <begin position="111"/>
        <end position="113"/>
    </location>
</feature>
<feature type="sequence conflict" description="In Ref. 1; BAG61554." evidence="7" ref="1">
    <original>L</original>
    <variation>P</variation>
    <location sequence="Q3ZCX4-3">
        <position position="542"/>
    </location>
</feature>
<proteinExistence type="evidence at protein level"/>
<comment type="function">
    <text evidence="1">Has transcriptional repression activity, partially through the recruitment of the corepressor TRIM28 but also has repression activity independently of this interaction. Essential during embryonic development, where it acts as a direct repressor of a placental-specific transcript of IGF2 in early development and regulates convergent extension movements required for axis elongation and tissue morphogenesis in all germ layers. Also important for normal morphogenesis of extraembryonic tissues including the yolk sac, extraembryonic mesoderm and placenta. May enhance proliferation or maintenance of neural stem cells.</text>
</comment>
<comment type="subunit">
    <text evidence="1">Interacts with TRIM28.</text>
</comment>
<comment type="subcellular location">
    <subcellularLocation>
        <location evidence="1">Nucleus</location>
    </subcellularLocation>
</comment>
<comment type="alternative products">
    <event type="alternative splicing"/>
    <isoform>
        <id>Q3ZCX4-1</id>
        <name>1</name>
        <sequence type="displayed"/>
    </isoform>
    <isoform>
        <id>Q3ZCX4-2</id>
        <name>2</name>
        <sequence type="described" ref="VSP_028556"/>
    </isoform>
    <isoform>
        <id>Q3ZCX4-3</id>
        <name>3</name>
        <sequence type="described" ref="VSP_028556 VSP_046815"/>
    </isoform>
</comment>
<comment type="polymorphism">
    <text evidence="4">Isoform 3 is highly polymorphic with three major alleles: H, C1 and C1. The H allele is found at higher frequencies in Japanese (0.71) and Taiwan Chinese (0.72) populations compared to European (0.45) and African (0.39) populations. The H allele may be associated with smaller head size in infants.</text>
</comment>
<comment type="similarity">
    <text evidence="7">Belongs to the krueppel C2H2-type zinc-finger protein family.</text>
</comment>
<comment type="sequence caution" evidence="7">
    <conflict type="erroneous initiation">
        <sequence resource="EMBL-CDS" id="AAH31218"/>
    </conflict>
    <text>Truncated N-terminus.</text>
</comment>
<comment type="sequence caution" evidence="7">
    <conflict type="miscellaneous discrepancy">
        <sequence resource="EMBL-CDS" id="AAH31218"/>
    </conflict>
    <text>Contaminating sequence. Potential poly-A sequence.</text>
</comment>
<comment type="sequence caution" evidence="7">
    <conflict type="frameshift">
        <sequence resource="EMBL-CDS" id="CAE45810"/>
    </conflict>
</comment>
<gene>
    <name type="primary">ZNF568</name>
</gene>
<name>ZN568_HUMAN</name>
<dbReference type="EMBL" id="AK093123">
    <property type="protein sequence ID" value="BAC04064.1"/>
    <property type="molecule type" value="mRNA"/>
</dbReference>
<dbReference type="EMBL" id="AK299626">
    <property type="protein sequence ID" value="BAG61554.1"/>
    <property type="molecule type" value="mRNA"/>
</dbReference>
<dbReference type="EMBL" id="BX640681">
    <property type="protein sequence ID" value="CAE45810.1"/>
    <property type="status" value="ALT_FRAME"/>
    <property type="molecule type" value="mRNA"/>
</dbReference>
<dbReference type="EMBL" id="AC008733">
    <property type="status" value="NOT_ANNOTATED_CDS"/>
    <property type="molecule type" value="Genomic_DNA"/>
</dbReference>
<dbReference type="EMBL" id="BC031218">
    <property type="protein sequence ID" value="AAH31218.1"/>
    <property type="status" value="ALT_SEQ"/>
    <property type="molecule type" value="mRNA"/>
</dbReference>
<dbReference type="CCDS" id="CCDS42558.1">
    <molecule id="Q3ZCX4-1"/>
</dbReference>
<dbReference type="CCDS" id="CCDS56092.1">
    <molecule id="Q3ZCX4-2"/>
</dbReference>
<dbReference type="CCDS" id="CCDS56093.1">
    <molecule id="Q3ZCX4-3"/>
</dbReference>
<dbReference type="RefSeq" id="NP_001191764.1">
    <property type="nucleotide sequence ID" value="NM_001204835.1"/>
</dbReference>
<dbReference type="RefSeq" id="NP_001191765.1">
    <molecule id="Q3ZCX4-2"/>
    <property type="nucleotide sequence ID" value="NM_001204836.2"/>
</dbReference>
<dbReference type="RefSeq" id="NP_001191766.1">
    <molecule id="Q3ZCX4-2"/>
    <property type="nucleotide sequence ID" value="NM_001204837.2"/>
</dbReference>
<dbReference type="RefSeq" id="NP_001191767.1">
    <property type="nucleotide sequence ID" value="NM_001204838.1"/>
</dbReference>
<dbReference type="RefSeq" id="NP_001191768.1">
    <molecule id="Q3ZCX4-3"/>
    <property type="nucleotide sequence ID" value="NM_001204839.2"/>
</dbReference>
<dbReference type="RefSeq" id="NP_940941.2">
    <molecule id="Q3ZCX4-1"/>
    <property type="nucleotide sequence ID" value="NM_198539.4"/>
</dbReference>
<dbReference type="RefSeq" id="XP_016882262.1">
    <property type="nucleotide sequence ID" value="XM_017026773.1"/>
</dbReference>
<dbReference type="RefSeq" id="XP_016882263.1">
    <property type="nucleotide sequence ID" value="XM_017026774.1"/>
</dbReference>
<dbReference type="RefSeq" id="XP_016882264.1">
    <property type="nucleotide sequence ID" value="XM_017026775.1"/>
</dbReference>
<dbReference type="RefSeq" id="XP_047294743.1">
    <molecule id="Q3ZCX4-1"/>
    <property type="nucleotide sequence ID" value="XM_047438787.1"/>
</dbReference>
<dbReference type="PDB" id="7W5Q">
    <property type="method" value="X-ray"/>
    <property type="resolution" value="2.73 A"/>
    <property type="chains" value="A/B=1-119"/>
</dbReference>
<dbReference type="PDB" id="8J8N">
    <property type="method" value="EM"/>
    <property type="resolution" value="9.02 A"/>
    <property type="chains" value="E/F=1-119"/>
</dbReference>
<dbReference type="PDBsum" id="7W5Q"/>
<dbReference type="PDBsum" id="8J8N"/>
<dbReference type="SMR" id="Q3ZCX4"/>
<dbReference type="BioGRID" id="131935">
    <property type="interactions" value="8"/>
</dbReference>
<dbReference type="FunCoup" id="Q3ZCX4">
    <property type="interactions" value="100"/>
</dbReference>
<dbReference type="IntAct" id="Q3ZCX4">
    <property type="interactions" value="2"/>
</dbReference>
<dbReference type="STRING" id="9606.ENSP00000334685"/>
<dbReference type="iPTMnet" id="Q3ZCX4"/>
<dbReference type="PhosphoSitePlus" id="Q3ZCX4"/>
<dbReference type="BioMuta" id="ZNF568"/>
<dbReference type="DMDM" id="158706494"/>
<dbReference type="jPOST" id="Q3ZCX4"/>
<dbReference type="MassIVE" id="Q3ZCX4"/>
<dbReference type="PaxDb" id="9606-ENSP00000481819"/>
<dbReference type="PeptideAtlas" id="Q3ZCX4"/>
<dbReference type="ProteomicsDB" id="17705"/>
<dbReference type="ProteomicsDB" id="61920">
    <molecule id="Q3ZCX4-1"/>
</dbReference>
<dbReference type="ProteomicsDB" id="61921">
    <molecule id="Q3ZCX4-2"/>
</dbReference>
<dbReference type="Antibodypedia" id="29844">
    <property type="antibodies" value="124 antibodies from 14 providers"/>
</dbReference>
<dbReference type="DNASU" id="374900"/>
<dbReference type="Ensembl" id="ENST00000333987.12">
    <molecule id="Q3ZCX4-1"/>
    <property type="protein sequence ID" value="ENSP00000334685.7"/>
    <property type="gene ID" value="ENSG00000198453.15"/>
</dbReference>
<dbReference type="Ensembl" id="ENST00000415168.5">
    <molecule id="Q3ZCX4-2"/>
    <property type="protein sequence ID" value="ENSP00000394514.1"/>
    <property type="gene ID" value="ENSG00000198453.15"/>
</dbReference>
<dbReference type="Ensembl" id="ENST00000455427.7">
    <molecule id="Q3ZCX4-3"/>
    <property type="protein sequence ID" value="ENSP00000413396.2"/>
    <property type="gene ID" value="ENSG00000198453.15"/>
</dbReference>
<dbReference type="Ensembl" id="ENST00000587130.6">
    <molecule id="Q3ZCX4-2"/>
    <property type="protein sequence ID" value="ENSP00000467578.2"/>
    <property type="gene ID" value="ENSG00000198453.15"/>
</dbReference>
<dbReference type="Ensembl" id="ENST00000587857.6">
    <molecule id="Q3ZCX4-2"/>
    <property type="protein sequence ID" value="ENSP00000466901.2"/>
    <property type="gene ID" value="ENSG00000198453.15"/>
</dbReference>
<dbReference type="Ensembl" id="ENST00000706170.1">
    <molecule id="Q3ZCX4-1"/>
    <property type="protein sequence ID" value="ENSP00000516249.1"/>
    <property type="gene ID" value="ENSG00000198453.15"/>
</dbReference>
<dbReference type="GeneID" id="374900"/>
<dbReference type="KEGG" id="hsa:374900"/>
<dbReference type="MANE-Select" id="ENST00000333987.12">
    <property type="protein sequence ID" value="ENSP00000334685.7"/>
    <property type="RefSeq nucleotide sequence ID" value="NM_198539.4"/>
    <property type="RefSeq protein sequence ID" value="NP_940941.2"/>
</dbReference>
<dbReference type="UCSC" id="uc002ofc.4">
    <molecule id="Q3ZCX4-1"/>
    <property type="organism name" value="human"/>
</dbReference>
<dbReference type="AGR" id="HGNC:25392"/>
<dbReference type="CTD" id="374900"/>
<dbReference type="DisGeNET" id="374900"/>
<dbReference type="GeneCards" id="ZNF568"/>
<dbReference type="HGNC" id="HGNC:25392">
    <property type="gene designation" value="ZNF568"/>
</dbReference>
<dbReference type="HPA" id="ENSG00000198453">
    <property type="expression patterns" value="Low tissue specificity"/>
</dbReference>
<dbReference type="MIM" id="617566">
    <property type="type" value="gene"/>
</dbReference>
<dbReference type="neXtProt" id="NX_Q3ZCX4"/>
<dbReference type="OpenTargets" id="ENSG00000198453"/>
<dbReference type="PharmGKB" id="PA134893477"/>
<dbReference type="VEuPathDB" id="HostDB:ENSG00000198453"/>
<dbReference type="eggNOG" id="KOG1721">
    <property type="taxonomic scope" value="Eukaryota"/>
</dbReference>
<dbReference type="GeneTree" id="ENSGT00940000162857"/>
<dbReference type="HOGENOM" id="CLU_002678_57_1_1"/>
<dbReference type="InParanoid" id="Q3ZCX4"/>
<dbReference type="OMA" id="MERTAWH"/>
<dbReference type="OrthoDB" id="654211at2759"/>
<dbReference type="PAN-GO" id="Q3ZCX4">
    <property type="GO annotations" value="4 GO annotations based on evolutionary models"/>
</dbReference>
<dbReference type="PhylomeDB" id="Q3ZCX4"/>
<dbReference type="TreeFam" id="TF337898"/>
<dbReference type="PathwayCommons" id="Q3ZCX4"/>
<dbReference type="Reactome" id="R-HSA-212436">
    <property type="pathway name" value="Generic Transcription Pathway"/>
</dbReference>
<dbReference type="SignaLink" id="Q3ZCX4"/>
<dbReference type="BioGRID-ORCS" id="374900">
    <property type="hits" value="13 hits in 1172 CRISPR screens"/>
</dbReference>
<dbReference type="ChiTaRS" id="ZNF568">
    <property type="organism name" value="human"/>
</dbReference>
<dbReference type="GenomeRNAi" id="374900"/>
<dbReference type="Pharos" id="Q3ZCX4">
    <property type="development level" value="Tdark"/>
</dbReference>
<dbReference type="PRO" id="PR:Q3ZCX4"/>
<dbReference type="Proteomes" id="UP000005640">
    <property type="component" value="Chromosome 19"/>
</dbReference>
<dbReference type="RNAct" id="Q3ZCX4">
    <property type="molecule type" value="protein"/>
</dbReference>
<dbReference type="Bgee" id="ENSG00000198453">
    <property type="expression patterns" value="Expressed in calcaneal tendon and 136 other cell types or tissues"/>
</dbReference>
<dbReference type="ExpressionAtlas" id="Q3ZCX4">
    <property type="expression patterns" value="baseline and differential"/>
</dbReference>
<dbReference type="GO" id="GO:0005634">
    <property type="term" value="C:nucleus"/>
    <property type="evidence" value="ECO:0000318"/>
    <property type="project" value="GO_Central"/>
</dbReference>
<dbReference type="GO" id="GO:0000981">
    <property type="term" value="F:DNA-binding transcription factor activity, RNA polymerase II-specific"/>
    <property type="evidence" value="ECO:0000318"/>
    <property type="project" value="GO_Central"/>
</dbReference>
<dbReference type="GO" id="GO:0000978">
    <property type="term" value="F:RNA polymerase II cis-regulatory region sequence-specific DNA binding"/>
    <property type="evidence" value="ECO:0000318"/>
    <property type="project" value="GO_Central"/>
</dbReference>
<dbReference type="GO" id="GO:0000976">
    <property type="term" value="F:transcription cis-regulatory region binding"/>
    <property type="evidence" value="ECO:0000250"/>
    <property type="project" value="UniProtKB"/>
</dbReference>
<dbReference type="GO" id="GO:0008270">
    <property type="term" value="F:zinc ion binding"/>
    <property type="evidence" value="ECO:0007669"/>
    <property type="project" value="UniProtKB-KW"/>
</dbReference>
<dbReference type="GO" id="GO:0060669">
    <property type="term" value="P:embryonic placenta morphogenesis"/>
    <property type="evidence" value="ECO:0000250"/>
    <property type="project" value="UniProtKB"/>
</dbReference>
<dbReference type="GO" id="GO:0001701">
    <property type="term" value="P:in utero embryonic development"/>
    <property type="evidence" value="ECO:0000250"/>
    <property type="project" value="UniProtKB"/>
</dbReference>
<dbReference type="GO" id="GO:0045892">
    <property type="term" value="P:negative regulation of DNA-templated transcription"/>
    <property type="evidence" value="ECO:0000250"/>
    <property type="project" value="UniProtKB"/>
</dbReference>
<dbReference type="GO" id="GO:0000122">
    <property type="term" value="P:negative regulation of transcription by RNA polymerase II"/>
    <property type="evidence" value="ECO:0000250"/>
    <property type="project" value="UniProtKB"/>
</dbReference>
<dbReference type="GO" id="GO:0006357">
    <property type="term" value="P:regulation of transcription by RNA polymerase II"/>
    <property type="evidence" value="ECO:0000318"/>
    <property type="project" value="GO_Central"/>
</dbReference>
<dbReference type="CDD" id="cd07765">
    <property type="entry name" value="KRAB_A-box"/>
    <property type="match status" value="1"/>
</dbReference>
<dbReference type="FunFam" id="3.30.160.60:FF:004137">
    <property type="match status" value="1"/>
</dbReference>
<dbReference type="FunFam" id="3.30.160.60:FF:004935">
    <property type="match status" value="1"/>
</dbReference>
<dbReference type="FunFam" id="3.30.160.60:FF:001158">
    <property type="entry name" value="zinc finger protein 22"/>
    <property type="match status" value="1"/>
</dbReference>
<dbReference type="FunFam" id="3.30.160.60:FF:001408">
    <property type="entry name" value="Zinc finger protein 260"/>
    <property type="match status" value="1"/>
</dbReference>
<dbReference type="FunFam" id="3.30.160.60:FF:002343">
    <property type="entry name" value="Zinc finger protein 33A"/>
    <property type="match status" value="1"/>
</dbReference>
<dbReference type="FunFam" id="3.30.160.60:FF:002402">
    <property type="entry name" value="Zinc finger protein 347"/>
    <property type="match status" value="2"/>
</dbReference>
<dbReference type="FunFam" id="3.30.160.60:FF:000016">
    <property type="entry name" value="zinc finger protein 37 homolog"/>
    <property type="match status" value="1"/>
</dbReference>
<dbReference type="FunFam" id="3.30.160.60:FF:001498">
    <property type="entry name" value="Zinc finger protein 404"/>
    <property type="match status" value="1"/>
</dbReference>
<dbReference type="FunFam" id="3.30.160.60:FF:002254">
    <property type="entry name" value="Zinc finger protein 540"/>
    <property type="match status" value="1"/>
</dbReference>
<dbReference type="FunFam" id="3.30.160.60:FF:000156">
    <property type="entry name" value="Zinc finger protein 568"/>
    <property type="match status" value="2"/>
</dbReference>
<dbReference type="FunFam" id="3.30.160.60:FF:001607">
    <property type="entry name" value="zinc finger protein 568 isoform X2"/>
    <property type="match status" value="1"/>
</dbReference>
<dbReference type="FunFam" id="3.30.160.60:FF:001270">
    <property type="entry name" value="zinc finger protein 583 isoform X1"/>
    <property type="match status" value="2"/>
</dbReference>
<dbReference type="FunFam" id="3.30.160.60:FF:000953">
    <property type="entry name" value="Zinc finger protein 691"/>
    <property type="match status" value="1"/>
</dbReference>
<dbReference type="FunFam" id="3.30.160.60:FF:000275">
    <property type="entry name" value="zinc finger protein 90 homolog"/>
    <property type="match status" value="1"/>
</dbReference>
<dbReference type="Gene3D" id="6.10.140.140">
    <property type="match status" value="1"/>
</dbReference>
<dbReference type="Gene3D" id="3.30.160.60">
    <property type="entry name" value="Classic Zinc Finger"/>
    <property type="match status" value="15"/>
</dbReference>
<dbReference type="InterPro" id="IPR001909">
    <property type="entry name" value="KRAB"/>
</dbReference>
<dbReference type="InterPro" id="IPR036051">
    <property type="entry name" value="KRAB_dom_sf"/>
</dbReference>
<dbReference type="InterPro" id="IPR036236">
    <property type="entry name" value="Znf_C2H2_sf"/>
</dbReference>
<dbReference type="InterPro" id="IPR013087">
    <property type="entry name" value="Znf_C2H2_type"/>
</dbReference>
<dbReference type="PANTHER" id="PTHR24399:SF54">
    <property type="entry name" value="GASTRULA ZINC FINGER PROTEIN XLCGF26.1-LIKE-RELATED"/>
    <property type="match status" value="1"/>
</dbReference>
<dbReference type="PANTHER" id="PTHR24399">
    <property type="entry name" value="ZINC FINGER AND BTB DOMAIN-CONTAINING"/>
    <property type="match status" value="1"/>
</dbReference>
<dbReference type="Pfam" id="PF01352">
    <property type="entry name" value="KRAB"/>
    <property type="match status" value="1"/>
</dbReference>
<dbReference type="Pfam" id="PF00096">
    <property type="entry name" value="zf-C2H2"/>
    <property type="match status" value="15"/>
</dbReference>
<dbReference type="SMART" id="SM00349">
    <property type="entry name" value="KRAB"/>
    <property type="match status" value="1"/>
</dbReference>
<dbReference type="SMART" id="SM00355">
    <property type="entry name" value="ZnF_C2H2"/>
    <property type="match status" value="15"/>
</dbReference>
<dbReference type="SUPFAM" id="SSF57667">
    <property type="entry name" value="beta-beta-alpha zinc fingers"/>
    <property type="match status" value="8"/>
</dbReference>
<dbReference type="SUPFAM" id="SSF109640">
    <property type="entry name" value="KRAB domain (Kruppel-associated box)"/>
    <property type="match status" value="1"/>
</dbReference>
<dbReference type="PROSITE" id="PS50805">
    <property type="entry name" value="KRAB"/>
    <property type="match status" value="1"/>
</dbReference>
<dbReference type="PROSITE" id="PS00028">
    <property type="entry name" value="ZINC_FINGER_C2H2_1"/>
    <property type="match status" value="15"/>
</dbReference>
<dbReference type="PROSITE" id="PS50157">
    <property type="entry name" value="ZINC_FINGER_C2H2_2"/>
    <property type="match status" value="15"/>
</dbReference>
<reference key="1">
    <citation type="journal article" date="2004" name="Nat. Genet.">
        <title>Complete sequencing and characterization of 21,243 full-length human cDNAs.</title>
        <authorList>
            <person name="Ota T."/>
            <person name="Suzuki Y."/>
            <person name="Nishikawa T."/>
            <person name="Otsuki T."/>
            <person name="Sugiyama T."/>
            <person name="Irie R."/>
            <person name="Wakamatsu A."/>
            <person name="Hayashi K."/>
            <person name="Sato H."/>
            <person name="Nagai K."/>
            <person name="Kimura K."/>
            <person name="Makita H."/>
            <person name="Sekine M."/>
            <person name="Obayashi M."/>
            <person name="Nishi T."/>
            <person name="Shibahara T."/>
            <person name="Tanaka T."/>
            <person name="Ishii S."/>
            <person name="Yamamoto J."/>
            <person name="Saito K."/>
            <person name="Kawai Y."/>
            <person name="Isono Y."/>
            <person name="Nakamura Y."/>
            <person name="Nagahari K."/>
            <person name="Murakami K."/>
            <person name="Yasuda T."/>
            <person name="Iwayanagi T."/>
            <person name="Wagatsuma M."/>
            <person name="Shiratori A."/>
            <person name="Sudo H."/>
            <person name="Hosoiri T."/>
            <person name="Kaku Y."/>
            <person name="Kodaira H."/>
            <person name="Kondo H."/>
            <person name="Sugawara M."/>
            <person name="Takahashi M."/>
            <person name="Kanda K."/>
            <person name="Yokoi T."/>
            <person name="Furuya T."/>
            <person name="Kikkawa E."/>
            <person name="Omura Y."/>
            <person name="Abe K."/>
            <person name="Kamihara K."/>
            <person name="Katsuta N."/>
            <person name="Sato K."/>
            <person name="Tanikawa M."/>
            <person name="Yamazaki M."/>
            <person name="Ninomiya K."/>
            <person name="Ishibashi T."/>
            <person name="Yamashita H."/>
            <person name="Murakawa K."/>
            <person name="Fujimori K."/>
            <person name="Tanai H."/>
            <person name="Kimata M."/>
            <person name="Watanabe M."/>
            <person name="Hiraoka S."/>
            <person name="Chiba Y."/>
            <person name="Ishida S."/>
            <person name="Ono Y."/>
            <person name="Takiguchi S."/>
            <person name="Watanabe S."/>
            <person name="Yosida M."/>
            <person name="Hotuta T."/>
            <person name="Kusano J."/>
            <person name="Kanehori K."/>
            <person name="Takahashi-Fujii A."/>
            <person name="Hara H."/>
            <person name="Tanase T.-O."/>
            <person name="Nomura Y."/>
            <person name="Togiya S."/>
            <person name="Komai F."/>
            <person name="Hara R."/>
            <person name="Takeuchi K."/>
            <person name="Arita M."/>
            <person name="Imose N."/>
            <person name="Musashino K."/>
            <person name="Yuuki H."/>
            <person name="Oshima A."/>
            <person name="Sasaki N."/>
            <person name="Aotsuka S."/>
            <person name="Yoshikawa Y."/>
            <person name="Matsunawa H."/>
            <person name="Ichihara T."/>
            <person name="Shiohata N."/>
            <person name="Sano S."/>
            <person name="Moriya S."/>
            <person name="Momiyama H."/>
            <person name="Satoh N."/>
            <person name="Takami S."/>
            <person name="Terashima Y."/>
            <person name="Suzuki O."/>
            <person name="Nakagawa S."/>
            <person name="Senoh A."/>
            <person name="Mizoguchi H."/>
            <person name="Goto Y."/>
            <person name="Shimizu F."/>
            <person name="Wakebe H."/>
            <person name="Hishigaki H."/>
            <person name="Watanabe T."/>
            <person name="Sugiyama A."/>
            <person name="Takemoto M."/>
            <person name="Kawakami B."/>
            <person name="Yamazaki M."/>
            <person name="Watanabe K."/>
            <person name="Kumagai A."/>
            <person name="Itakura S."/>
            <person name="Fukuzumi Y."/>
            <person name="Fujimori Y."/>
            <person name="Komiyama M."/>
            <person name="Tashiro H."/>
            <person name="Tanigami A."/>
            <person name="Fujiwara T."/>
            <person name="Ono T."/>
            <person name="Yamada K."/>
            <person name="Fujii Y."/>
            <person name="Ozaki K."/>
            <person name="Hirao M."/>
            <person name="Ohmori Y."/>
            <person name="Kawabata A."/>
            <person name="Hikiji T."/>
            <person name="Kobatake N."/>
            <person name="Inagaki H."/>
            <person name="Ikema Y."/>
            <person name="Okamoto S."/>
            <person name="Okitani R."/>
            <person name="Kawakami T."/>
            <person name="Noguchi S."/>
            <person name="Itoh T."/>
            <person name="Shigeta K."/>
            <person name="Senba T."/>
            <person name="Matsumura K."/>
            <person name="Nakajima Y."/>
            <person name="Mizuno T."/>
            <person name="Morinaga M."/>
            <person name="Sasaki M."/>
            <person name="Togashi T."/>
            <person name="Oyama M."/>
            <person name="Hata H."/>
            <person name="Watanabe M."/>
            <person name="Komatsu T."/>
            <person name="Mizushima-Sugano J."/>
            <person name="Satoh T."/>
            <person name="Shirai Y."/>
            <person name="Takahashi Y."/>
            <person name="Nakagawa K."/>
            <person name="Okumura K."/>
            <person name="Nagase T."/>
            <person name="Nomura N."/>
            <person name="Kikuchi H."/>
            <person name="Masuho Y."/>
            <person name="Yamashita R."/>
            <person name="Nakai K."/>
            <person name="Yada T."/>
            <person name="Nakamura Y."/>
            <person name="Ohara O."/>
            <person name="Isogai T."/>
            <person name="Sugano S."/>
        </authorList>
    </citation>
    <scope>NUCLEOTIDE SEQUENCE [LARGE SCALE MRNA] (ISOFORM 3)</scope>
    <scope>NUCLEOTIDE SEQUENCE [LARGE SCALE MRNA] OF 1-594 (ISOFORM 2)</scope>
    <source>
        <tissue>Brain</tissue>
        <tissue>Testis</tissue>
    </source>
</reference>
<reference key="2">
    <citation type="journal article" date="2007" name="BMC Genomics">
        <title>The full-ORF clone resource of the German cDNA consortium.</title>
        <authorList>
            <person name="Bechtel S."/>
            <person name="Rosenfelder H."/>
            <person name="Duda A."/>
            <person name="Schmidt C.P."/>
            <person name="Ernst U."/>
            <person name="Wellenreuther R."/>
            <person name="Mehrle A."/>
            <person name="Schuster C."/>
            <person name="Bahr A."/>
            <person name="Bloecker H."/>
            <person name="Heubner D."/>
            <person name="Hoerlein A."/>
            <person name="Michel G."/>
            <person name="Wedler H."/>
            <person name="Koehrer K."/>
            <person name="Ottenwaelder B."/>
            <person name="Poustka A."/>
            <person name="Wiemann S."/>
            <person name="Schupp I."/>
        </authorList>
    </citation>
    <scope>NUCLEOTIDE SEQUENCE [LARGE SCALE MRNA] (ISOFORM 2)</scope>
    <source>
        <tissue>Retina</tissue>
    </source>
</reference>
<reference key="3">
    <citation type="journal article" date="2004" name="Nature">
        <title>The DNA sequence and biology of human chromosome 19.</title>
        <authorList>
            <person name="Grimwood J."/>
            <person name="Gordon L.A."/>
            <person name="Olsen A.S."/>
            <person name="Terry A."/>
            <person name="Schmutz J."/>
            <person name="Lamerdin J.E."/>
            <person name="Hellsten U."/>
            <person name="Goodstein D."/>
            <person name="Couronne O."/>
            <person name="Tran-Gyamfi M."/>
            <person name="Aerts A."/>
            <person name="Altherr M."/>
            <person name="Ashworth L."/>
            <person name="Bajorek E."/>
            <person name="Black S."/>
            <person name="Branscomb E."/>
            <person name="Caenepeel S."/>
            <person name="Carrano A.V."/>
            <person name="Caoile C."/>
            <person name="Chan Y.M."/>
            <person name="Christensen M."/>
            <person name="Cleland C.A."/>
            <person name="Copeland A."/>
            <person name="Dalin E."/>
            <person name="Dehal P."/>
            <person name="Denys M."/>
            <person name="Detter J.C."/>
            <person name="Escobar J."/>
            <person name="Flowers D."/>
            <person name="Fotopulos D."/>
            <person name="Garcia C."/>
            <person name="Georgescu A.M."/>
            <person name="Glavina T."/>
            <person name="Gomez M."/>
            <person name="Gonzales E."/>
            <person name="Groza M."/>
            <person name="Hammon N."/>
            <person name="Hawkins T."/>
            <person name="Haydu L."/>
            <person name="Ho I."/>
            <person name="Huang W."/>
            <person name="Israni S."/>
            <person name="Jett J."/>
            <person name="Kadner K."/>
            <person name="Kimball H."/>
            <person name="Kobayashi A."/>
            <person name="Larionov V."/>
            <person name="Leem S.-H."/>
            <person name="Lopez F."/>
            <person name="Lou Y."/>
            <person name="Lowry S."/>
            <person name="Malfatti S."/>
            <person name="Martinez D."/>
            <person name="McCready P.M."/>
            <person name="Medina C."/>
            <person name="Morgan J."/>
            <person name="Nelson K."/>
            <person name="Nolan M."/>
            <person name="Ovcharenko I."/>
            <person name="Pitluck S."/>
            <person name="Pollard M."/>
            <person name="Popkie A.P."/>
            <person name="Predki P."/>
            <person name="Quan G."/>
            <person name="Ramirez L."/>
            <person name="Rash S."/>
            <person name="Retterer J."/>
            <person name="Rodriguez A."/>
            <person name="Rogers S."/>
            <person name="Salamov A."/>
            <person name="Salazar A."/>
            <person name="She X."/>
            <person name="Smith D."/>
            <person name="Slezak T."/>
            <person name="Solovyev V."/>
            <person name="Thayer N."/>
            <person name="Tice H."/>
            <person name="Tsai M."/>
            <person name="Ustaszewska A."/>
            <person name="Vo N."/>
            <person name="Wagner M."/>
            <person name="Wheeler J."/>
            <person name="Wu K."/>
            <person name="Xie G."/>
            <person name="Yang J."/>
            <person name="Dubchak I."/>
            <person name="Furey T.S."/>
            <person name="DeJong P."/>
            <person name="Dickson M."/>
            <person name="Gordon D."/>
            <person name="Eichler E.E."/>
            <person name="Pennacchio L.A."/>
            <person name="Richardson P."/>
            <person name="Stubbs L."/>
            <person name="Rokhsar D.S."/>
            <person name="Myers R.M."/>
            <person name="Rubin E.M."/>
            <person name="Lucas S.M."/>
        </authorList>
    </citation>
    <scope>NUCLEOTIDE SEQUENCE [LARGE SCALE GENOMIC DNA]</scope>
</reference>
<reference key="4">
    <citation type="journal article" date="2004" name="Genome Res.">
        <title>The status, quality, and expansion of the NIH full-length cDNA project: the Mammalian Gene Collection (MGC).</title>
        <authorList>
            <consortium name="The MGC Project Team"/>
        </authorList>
    </citation>
    <scope>NUCLEOTIDE SEQUENCE [LARGE SCALE MRNA] OF 1-401 (ISOFORM 1)</scope>
    <source>
        <tissue>Brain</tissue>
    </source>
</reference>
<reference key="5">
    <citation type="journal article" date="2012" name="PLoS ONE">
        <title>Targeted disruption in mice of a neural stem cell-maintaining, KRAB-Zn finger-encoding gene that has rapidly evolved in the human lineage.</title>
        <authorList>
            <person name="Chien H.C."/>
            <person name="Wang H.Y."/>
            <person name="Su Y.N."/>
            <person name="Lai K.Y."/>
            <person name="Lu L.C."/>
            <person name="Chen P.C."/>
            <person name="Tsai S.F."/>
            <person name="Wu C.I."/>
            <person name="Hsieh W.S."/>
            <person name="Shen C.K."/>
        </authorList>
    </citation>
    <scope>POLYMORPHISM</scope>
</reference>
<sequence>MTSQSSVISNSCVTMERLSHMMERKAWCSQESALSEEEEDTTRPLETVTFKDVAVDLTQEEWEQMKPAQRNLYRDVMLENYSNLVTVGCQVTKPDVIFKLEQEEEPWVMEEEMFGRHCPEVWEVDEQIKKQQETLVRKVTSISKKILIKEKVIECKKVAKIFPLSSDIVTSRQSFYDCDSLDKGLEHNLDLLRYEKGCVREKQSNEFGKPFYHCASYVVTPFKCNQCGQDFSHKFDLIRHERIHAGEKPYECKECGKAFSRKENLITHQKIHTGEKPYKCNECGKAFIQMSNLIRHHRIHTGEKPYACKDCWKAFSQKSNLIEHERIHTGEKPYECKECGKSFSQKQNLIEHEKIHTGEKPYACNECGRAFSRMSSVTLHMRSHTGEKPYKCNKCGKAFSQCSVFIIHMRSHTGEKPYVCSECGKAFSQSSSLTVHMRNHTAEKPYECKECGKAFSRKENLITHQKIHTGEKPYECSECGKAFIQMSNLIRHQRIHTGEKPYACTVCGKAFSQKSNLTEHEKIHTGEKPYHCNQCGKAFSQRQNLLEHEKIHTGEKPFKCNECGKAFSRISSLTLHVRSHTGEKPYECNKCGKAFSQCSLLIIHMRSHTGEKPFECNECGKAFSQRASLSIHKRGHTGERHQVY</sequence>